<evidence type="ECO:0000250" key="1"/>
<evidence type="ECO:0000255" key="2">
    <source>
        <dbReference type="PROSITE-ProRule" id="PRU00995"/>
    </source>
</evidence>
<evidence type="ECO:0000255" key="3">
    <source>
        <dbReference type="PROSITE-ProRule" id="PRU01383"/>
    </source>
</evidence>
<evidence type="ECO:0000255" key="4">
    <source>
        <dbReference type="PROSITE-ProRule" id="PRU10131"/>
    </source>
</evidence>
<evidence type="ECO:0000256" key="5">
    <source>
        <dbReference type="SAM" id="MobiDB-lite"/>
    </source>
</evidence>
<evidence type="ECO:0000305" key="6"/>
<proteinExistence type="evidence at protein level"/>
<gene>
    <name type="primary">Top3b</name>
    <name type="synonym">Top3b1</name>
</gene>
<keyword id="KW-0238">DNA-binding</keyword>
<keyword id="KW-0413">Isomerase</keyword>
<keyword id="KW-1185">Reference proteome</keyword>
<keyword id="KW-0799">Topoisomerase</keyword>
<name>TOP3B_MOUSE</name>
<comment type="function">
    <text evidence="1">Releases the supercoiling and torsional tension of DNA introduced during the DNA replication and transcription by transiently cleaving and rejoining one strand of the DNA duplex. Introduces a single-strand break via transesterification at a target site in duplex DNA. The scissile phosphodiester is attacked by the catalytic tyrosine of the enzyme, resulting in the formation of a DNA-(5'-phosphotyrosyl)-enzyme intermediate and the expulsion of a 3'-OH DNA strand. The free DNA strand than undergoes passage around the unbroken strand thus removing DNA supercoils. Finally, in the religation step, the DNA 3'-OH attacks the covalent intermediate to expel the active-site tyrosine and restore the DNA phosphodiester backbone (By similarity). Possesses negatively supercoiled DNA relaxing activity.</text>
</comment>
<comment type="catalytic activity">
    <reaction evidence="4">
        <text>ATP-independent breakage of single-stranded DNA, followed by passage and rejoining.</text>
        <dbReference type="EC" id="5.6.2.1"/>
    </reaction>
</comment>
<comment type="tissue specificity">
    <text>Highly expressed in testis.</text>
</comment>
<comment type="similarity">
    <text evidence="3 6">Belongs to the type IA topoisomerase family.</text>
</comment>
<accession>Q9Z321</accession>
<dbReference type="EC" id="5.6.2.1" evidence="4"/>
<dbReference type="EMBL" id="AB013603">
    <property type="protein sequence ID" value="BAA34227.1"/>
    <property type="molecule type" value="mRNA"/>
</dbReference>
<dbReference type="EMBL" id="BC031723">
    <property type="protein sequence ID" value="AAH31723.1"/>
    <property type="molecule type" value="mRNA"/>
</dbReference>
<dbReference type="CCDS" id="CCDS27990.1"/>
<dbReference type="RefSeq" id="NP_001313505.1">
    <property type="nucleotide sequence ID" value="NM_001326576.1"/>
</dbReference>
<dbReference type="RefSeq" id="NP_035754.1">
    <property type="nucleotide sequence ID" value="NM_011624.3"/>
</dbReference>
<dbReference type="RefSeq" id="XP_006522054.1">
    <property type="nucleotide sequence ID" value="XM_006521991.5"/>
</dbReference>
<dbReference type="RefSeq" id="XP_006522055.1">
    <property type="nucleotide sequence ID" value="XM_006521992.5"/>
</dbReference>
<dbReference type="RefSeq" id="XP_006522057.1">
    <property type="nucleotide sequence ID" value="XM_006521994.4"/>
</dbReference>
<dbReference type="RefSeq" id="XP_006522058.1">
    <property type="nucleotide sequence ID" value="XM_006521995.4"/>
</dbReference>
<dbReference type="RefSeq" id="XP_017172426.1">
    <property type="nucleotide sequence ID" value="XM_017316937.3"/>
</dbReference>
<dbReference type="RefSeq" id="XP_036015766.1">
    <property type="nucleotide sequence ID" value="XM_036159873.1"/>
</dbReference>
<dbReference type="SMR" id="Q9Z321"/>
<dbReference type="BioGRID" id="204279">
    <property type="interactions" value="7"/>
</dbReference>
<dbReference type="ComplexPortal" id="CPX-3302">
    <property type="entry name" value="TDRD3-TOP3B type IA topoisomerase complex"/>
</dbReference>
<dbReference type="FunCoup" id="Q9Z321">
    <property type="interactions" value="2003"/>
</dbReference>
<dbReference type="IntAct" id="Q9Z321">
    <property type="interactions" value="5"/>
</dbReference>
<dbReference type="MINT" id="Q9Z321"/>
<dbReference type="STRING" id="10090.ENSMUSP00000023465"/>
<dbReference type="iPTMnet" id="Q9Z321"/>
<dbReference type="PhosphoSitePlus" id="Q9Z321"/>
<dbReference type="jPOST" id="Q9Z321"/>
<dbReference type="PaxDb" id="10090-ENSMUSP00000023465"/>
<dbReference type="ProteomicsDB" id="258951"/>
<dbReference type="Pumba" id="Q9Z321"/>
<dbReference type="Antibodypedia" id="3974">
    <property type="antibodies" value="209 antibodies from 29 providers"/>
</dbReference>
<dbReference type="DNASU" id="21976"/>
<dbReference type="Ensembl" id="ENSMUST00000023465.16">
    <property type="protein sequence ID" value="ENSMUSP00000023465.8"/>
    <property type="gene ID" value="ENSMUSG00000022779.17"/>
</dbReference>
<dbReference type="Ensembl" id="ENSMUST00000232581.2">
    <property type="protein sequence ID" value="ENSMUSP00000156132.2"/>
    <property type="gene ID" value="ENSMUSG00000022779.17"/>
</dbReference>
<dbReference type="GeneID" id="21976"/>
<dbReference type="KEGG" id="mmu:21976"/>
<dbReference type="UCSC" id="uc007yjj.1">
    <property type="organism name" value="mouse"/>
</dbReference>
<dbReference type="AGR" id="MGI:1333803"/>
<dbReference type="CTD" id="8940"/>
<dbReference type="MGI" id="MGI:1333803">
    <property type="gene designation" value="Top3b"/>
</dbReference>
<dbReference type="VEuPathDB" id="HostDB:ENSMUSG00000022779"/>
<dbReference type="eggNOG" id="KOG1957">
    <property type="taxonomic scope" value="Eukaryota"/>
</dbReference>
<dbReference type="GeneTree" id="ENSGT00940000156516"/>
<dbReference type="HOGENOM" id="CLU_002929_1_0_1"/>
<dbReference type="InParanoid" id="Q9Z321"/>
<dbReference type="OMA" id="VIHNVYS"/>
<dbReference type="OrthoDB" id="430051at2759"/>
<dbReference type="PhylomeDB" id="Q9Z321"/>
<dbReference type="TreeFam" id="TF105288"/>
<dbReference type="BioGRID-ORCS" id="21976">
    <property type="hits" value="2 hits in 77 CRISPR screens"/>
</dbReference>
<dbReference type="CD-CODE" id="DE1E139C">
    <property type="entry name" value="Chromatoid body"/>
</dbReference>
<dbReference type="ChiTaRS" id="Top3b">
    <property type="organism name" value="mouse"/>
</dbReference>
<dbReference type="PRO" id="PR:Q9Z321"/>
<dbReference type="Proteomes" id="UP000000589">
    <property type="component" value="Chromosome 16"/>
</dbReference>
<dbReference type="RNAct" id="Q9Z321">
    <property type="molecule type" value="protein"/>
</dbReference>
<dbReference type="Bgee" id="ENSMUSG00000022779">
    <property type="expression patterns" value="Expressed in choroid plexus epithelium and 265 other cell types or tissues"/>
</dbReference>
<dbReference type="ExpressionAtlas" id="Q9Z321">
    <property type="expression patterns" value="baseline and differential"/>
</dbReference>
<dbReference type="GO" id="GO:0000793">
    <property type="term" value="C:condensed chromosome"/>
    <property type="evidence" value="ECO:0000314"/>
    <property type="project" value="MGI"/>
</dbReference>
<dbReference type="GO" id="GO:0140225">
    <property type="term" value="C:DNA topoisomerase III-beta-TDRD3 complex"/>
    <property type="evidence" value="ECO:0000303"/>
    <property type="project" value="ComplexPortal"/>
</dbReference>
<dbReference type="GO" id="GO:0005634">
    <property type="term" value="C:nucleus"/>
    <property type="evidence" value="ECO:0000266"/>
    <property type="project" value="ComplexPortal"/>
</dbReference>
<dbReference type="GO" id="GO:0003677">
    <property type="term" value="F:DNA binding"/>
    <property type="evidence" value="ECO:0007669"/>
    <property type="project" value="UniProtKB-KW"/>
</dbReference>
<dbReference type="GO" id="GO:0003917">
    <property type="term" value="F:DNA topoisomerase type I (single strand cut, ATP-independent) activity"/>
    <property type="evidence" value="ECO:0007669"/>
    <property type="project" value="UniProtKB-EC"/>
</dbReference>
<dbReference type="GO" id="GO:0140226">
    <property type="term" value="F:RNA topoisomerase activity"/>
    <property type="evidence" value="ECO:0007669"/>
    <property type="project" value="Ensembl"/>
</dbReference>
<dbReference type="GO" id="GO:0007059">
    <property type="term" value="P:chromosome segregation"/>
    <property type="evidence" value="ECO:0000315"/>
    <property type="project" value="MGI"/>
</dbReference>
<dbReference type="GO" id="GO:0006265">
    <property type="term" value="P:DNA topological change"/>
    <property type="evidence" value="ECO:0000303"/>
    <property type="project" value="ComplexPortal"/>
</dbReference>
<dbReference type="CDD" id="cd00186">
    <property type="entry name" value="TOP1Ac"/>
    <property type="match status" value="1"/>
</dbReference>
<dbReference type="CDD" id="cd03362">
    <property type="entry name" value="TOPRIM_TopoIA_TopoIII"/>
    <property type="match status" value="1"/>
</dbReference>
<dbReference type="FunFam" id="1.10.290.10:FF:000001">
    <property type="entry name" value="DNA topoisomerase"/>
    <property type="match status" value="1"/>
</dbReference>
<dbReference type="FunFam" id="1.10.460.10:FF:000032">
    <property type="entry name" value="DNA topoisomerase"/>
    <property type="match status" value="1"/>
</dbReference>
<dbReference type="FunFam" id="3.40.50.140:FF:000002">
    <property type="entry name" value="DNA topoisomerase"/>
    <property type="match status" value="1"/>
</dbReference>
<dbReference type="Gene3D" id="3.40.50.140">
    <property type="match status" value="1"/>
</dbReference>
<dbReference type="Gene3D" id="1.10.460.10">
    <property type="entry name" value="Topoisomerase I, domain 2"/>
    <property type="match status" value="1"/>
</dbReference>
<dbReference type="Gene3D" id="2.70.20.10">
    <property type="entry name" value="Topoisomerase I, domain 3"/>
    <property type="match status" value="1"/>
</dbReference>
<dbReference type="Gene3D" id="1.10.290.10">
    <property type="entry name" value="Topoisomerase I, domain 4"/>
    <property type="match status" value="1"/>
</dbReference>
<dbReference type="InterPro" id="IPR000380">
    <property type="entry name" value="Topo_IA"/>
</dbReference>
<dbReference type="InterPro" id="IPR003601">
    <property type="entry name" value="Topo_IA_2"/>
</dbReference>
<dbReference type="InterPro" id="IPR023406">
    <property type="entry name" value="Topo_IA_AS"/>
</dbReference>
<dbReference type="InterPro" id="IPR013497">
    <property type="entry name" value="Topo_IA_cen"/>
</dbReference>
<dbReference type="InterPro" id="IPR013824">
    <property type="entry name" value="Topo_IA_cen_sub1"/>
</dbReference>
<dbReference type="InterPro" id="IPR013825">
    <property type="entry name" value="Topo_IA_cen_sub2"/>
</dbReference>
<dbReference type="InterPro" id="IPR013826">
    <property type="entry name" value="Topo_IA_cen_sub3"/>
</dbReference>
<dbReference type="InterPro" id="IPR023405">
    <property type="entry name" value="Topo_IA_core_domain"/>
</dbReference>
<dbReference type="InterPro" id="IPR003602">
    <property type="entry name" value="Topo_IA_DNA-bd_dom"/>
</dbReference>
<dbReference type="InterPro" id="IPR006171">
    <property type="entry name" value="TOPRIM_dom"/>
</dbReference>
<dbReference type="InterPro" id="IPR034144">
    <property type="entry name" value="TOPRIM_TopoIII"/>
</dbReference>
<dbReference type="InterPro" id="IPR056452">
    <property type="entry name" value="Zn_ribbon_TOP3B"/>
</dbReference>
<dbReference type="PANTHER" id="PTHR11390:SF20">
    <property type="entry name" value="DNA TOPOISOMERASE 3-BETA-1"/>
    <property type="match status" value="1"/>
</dbReference>
<dbReference type="PANTHER" id="PTHR11390">
    <property type="entry name" value="PROKARYOTIC DNA TOPOISOMERASE"/>
    <property type="match status" value="1"/>
</dbReference>
<dbReference type="Pfam" id="PF01131">
    <property type="entry name" value="Topoisom_bac"/>
    <property type="match status" value="1"/>
</dbReference>
<dbReference type="Pfam" id="PF01751">
    <property type="entry name" value="Toprim"/>
    <property type="match status" value="1"/>
</dbReference>
<dbReference type="Pfam" id="PF23546">
    <property type="entry name" value="Zn_ribbon_TOP3B"/>
    <property type="match status" value="1"/>
</dbReference>
<dbReference type="PRINTS" id="PR00417">
    <property type="entry name" value="PRTPISMRASEI"/>
</dbReference>
<dbReference type="SMART" id="SM00437">
    <property type="entry name" value="TOP1Ac"/>
    <property type="match status" value="1"/>
</dbReference>
<dbReference type="SMART" id="SM00436">
    <property type="entry name" value="TOP1Bc"/>
    <property type="match status" value="1"/>
</dbReference>
<dbReference type="SMART" id="SM00493">
    <property type="entry name" value="TOPRIM"/>
    <property type="match status" value="1"/>
</dbReference>
<dbReference type="SUPFAM" id="SSF56712">
    <property type="entry name" value="Prokaryotic type I DNA topoisomerase"/>
    <property type="match status" value="1"/>
</dbReference>
<dbReference type="PROSITE" id="PS00396">
    <property type="entry name" value="TOPO_IA_1"/>
    <property type="match status" value="1"/>
</dbReference>
<dbReference type="PROSITE" id="PS52039">
    <property type="entry name" value="TOPO_IA_2"/>
    <property type="match status" value="1"/>
</dbReference>
<dbReference type="PROSITE" id="PS50880">
    <property type="entry name" value="TOPRIM"/>
    <property type="match status" value="1"/>
</dbReference>
<sequence length="862" mass="96949">MKTVLMVAEKPSLAQSIAKILSRGNMSSHKGLNGACSVHKYTGTFAGQPVHFKMTSVCGHVMTLDFLGKYNKWDKVDPAELFSQAPTEKKEANPKLNMVKFLQVEGRGCDYVVLWLDCDKEGENICFEVLDAVLPVMNNAHNGEKTVFRARFSSITDTDICNAMTRLSEPDHNEALSVDARQELDLRIGCAFTRFQTKYFQGKYGDLDSSLISFGPCQTPTLGFCVERHDKIQSFKPETYWVLQAKVHTDKEESLLLDWDRVRVFDWEIAQMFLNMTKLEKEAWVEATSRKEKAKQRPLALNTVEMLRVASSALGMGPQHAMQIAERLYTQGYISYPRTETTHYPENFDLKGSLRQQANHPYWADSVKQLLAEGINRPRKGHDAGDHPPITPMKSATEAELGGDAWRLYEYITRHFIATVSHDCKYLQSTISFRIGPEHFTCMGKTVISPGFTEIMPWQSVPLEESLPTCQKGDTFTVGEVKMLEKQTSPPDYLTEAELITLMEKHGIGTDASIPVHINNICQRNYVTVESGRRLKPTNLGIVLVHGYYKIDAELVLPTIRSAVEKQLNLIAQGKADYHQVLGHTLDIFKRKFHYFVDSIAGMDELMEVSFSPLAATGKPLSRCGKCHRFMKYIQAKPSRLHCSHCDETYTLPQNGTIKLYKELRCPLDDFELVLWSSGSRGKSYPLCPYCYNHPPFRDMKKGMGCNECTHPTCQHSLSMLGIGQCVECENGVLVLDPTSGPKWKVACNTCNVVAHCFENAHRVRVSADTCNTCEAALLDVDFNKAKSPLPGNETQHTGCIFCDPVFQELVELKHAASCHPMHRGGPGRRQGRGRGRGRRPPGKPNPRRPKDKMSALAAYFV</sequence>
<protein>
    <recommendedName>
        <fullName>DNA topoisomerase 3-beta-1</fullName>
        <ecNumber evidence="4">5.6.2.1</ecNumber>
    </recommendedName>
    <alternativeName>
        <fullName>DNA topoisomerase III beta-1</fullName>
    </alternativeName>
</protein>
<reference key="1">
    <citation type="journal article" date="1998" name="J. Biol. Chem.">
        <title>Cloning of cDNA encoding a novel mouse DNA topoisomerase III (Topo IIIbeta) possessing negatively supercoiled DNA relaxing activity, whose message is highly expressed in the testis.</title>
        <authorList>
            <person name="Seki T."/>
            <person name="Seki M."/>
            <person name="Onodera R."/>
            <person name="Katada T."/>
            <person name="Enomoto T."/>
        </authorList>
    </citation>
    <scope>NUCLEOTIDE SEQUENCE [MRNA]</scope>
    <source>
        <strain>BALB/cJ</strain>
        <tissue>Testis</tissue>
    </source>
</reference>
<reference key="2">
    <citation type="journal article" date="2004" name="Genome Res.">
        <title>The status, quality, and expansion of the NIH full-length cDNA project: the Mammalian Gene Collection (MGC).</title>
        <authorList>
            <consortium name="The MGC Project Team"/>
        </authorList>
    </citation>
    <scope>NUCLEOTIDE SEQUENCE [LARGE SCALE MRNA]</scope>
    <source>
        <strain>FVB/N-3</strain>
        <tissue>Mammary gland</tissue>
    </source>
</reference>
<reference key="3">
    <citation type="journal article" date="2010" name="Cell">
        <title>A tissue-specific atlas of mouse protein phosphorylation and expression.</title>
        <authorList>
            <person name="Huttlin E.L."/>
            <person name="Jedrychowski M.P."/>
            <person name="Elias J.E."/>
            <person name="Goswami T."/>
            <person name="Rad R."/>
            <person name="Beausoleil S.A."/>
            <person name="Villen J."/>
            <person name="Haas W."/>
            <person name="Sowa M.E."/>
            <person name="Gygi S.P."/>
        </authorList>
    </citation>
    <scope>IDENTIFICATION BY MASS SPECTROMETRY [LARGE SCALE ANALYSIS]</scope>
    <source>
        <tissue>Kidney</tissue>
        <tissue>Liver</tissue>
        <tissue>Lung</tissue>
        <tissue>Pancreas</tissue>
        <tissue>Spleen</tissue>
    </source>
</reference>
<feature type="chain" id="PRO_0000145193" description="DNA topoisomerase 3-beta-1">
    <location>
        <begin position="1"/>
        <end position="862"/>
    </location>
</feature>
<feature type="domain" description="Toprim" evidence="2">
    <location>
        <begin position="3"/>
        <end position="153"/>
    </location>
</feature>
<feature type="domain" description="Topo IA-type catalytic" evidence="3">
    <location>
        <begin position="171"/>
        <end position="593"/>
    </location>
</feature>
<feature type="region of interest" description="Disordered" evidence="5">
    <location>
        <begin position="820"/>
        <end position="855"/>
    </location>
</feature>
<feature type="compositionally biased region" description="Basic residues" evidence="5">
    <location>
        <begin position="821"/>
        <end position="851"/>
    </location>
</feature>
<feature type="active site" description="O-(5'-phospho-DNA)-tyrosine intermediate" evidence="3">
    <location>
        <position position="336"/>
    </location>
</feature>
<organism>
    <name type="scientific">Mus musculus</name>
    <name type="common">Mouse</name>
    <dbReference type="NCBI Taxonomy" id="10090"/>
    <lineage>
        <taxon>Eukaryota</taxon>
        <taxon>Metazoa</taxon>
        <taxon>Chordata</taxon>
        <taxon>Craniata</taxon>
        <taxon>Vertebrata</taxon>
        <taxon>Euteleostomi</taxon>
        <taxon>Mammalia</taxon>
        <taxon>Eutheria</taxon>
        <taxon>Euarchontoglires</taxon>
        <taxon>Glires</taxon>
        <taxon>Rodentia</taxon>
        <taxon>Myomorpha</taxon>
        <taxon>Muroidea</taxon>
        <taxon>Muridae</taxon>
        <taxon>Murinae</taxon>
        <taxon>Mus</taxon>
        <taxon>Mus</taxon>
    </lineage>
</organism>